<comment type="function">
    <text evidence="1">Located at the top of the head of the 30S subunit, it contacts several helices of the 16S rRNA. In the 70S ribosome it contacts the 23S rRNA (bridge B1a) and protein L5 of the 50S subunit (bridge B1b), connecting the 2 subunits; these bridges are implicated in subunit movement. Contacts the tRNAs in the A and P-sites.</text>
</comment>
<comment type="subunit">
    <text evidence="1">Part of the 30S ribosomal subunit. Forms a loose heterodimer with protein S19. Forms two bridges to the 50S subunit in the 70S ribosome.</text>
</comment>
<comment type="similarity">
    <text evidence="1">Belongs to the universal ribosomal protein uS13 family.</text>
</comment>
<feature type="chain" id="PRO_1000141290" description="Small ribosomal subunit protein uS13">
    <location>
        <begin position="1"/>
        <end position="124"/>
    </location>
</feature>
<feature type="region of interest" description="Disordered" evidence="2">
    <location>
        <begin position="95"/>
        <end position="124"/>
    </location>
</feature>
<reference key="1">
    <citation type="journal article" date="2009" name="PLoS ONE">
        <title>Non mycobacterial virulence genes in the genome of the emerging pathogen Mycobacterium abscessus.</title>
        <authorList>
            <person name="Ripoll F."/>
            <person name="Pasek S."/>
            <person name="Schenowitz C."/>
            <person name="Dossat C."/>
            <person name="Barbe V."/>
            <person name="Rottman M."/>
            <person name="Macheras E."/>
            <person name="Heym B."/>
            <person name="Herrmann J.L."/>
            <person name="Daffe M."/>
            <person name="Brosch R."/>
            <person name="Risler J.L."/>
            <person name="Gaillard J.L."/>
        </authorList>
    </citation>
    <scope>NUCLEOTIDE SEQUENCE [LARGE SCALE GENOMIC DNA]</scope>
    <source>
        <strain>ATCC 19977 / DSM 44196 / CCUG 20993 / CIP 104536 / JCM 13569 / NCTC 13031 / TMC 1543 / L948</strain>
    </source>
</reference>
<keyword id="KW-1185">Reference proteome</keyword>
<keyword id="KW-0687">Ribonucleoprotein</keyword>
<keyword id="KW-0689">Ribosomal protein</keyword>
<keyword id="KW-0694">RNA-binding</keyword>
<keyword id="KW-0699">rRNA-binding</keyword>
<keyword id="KW-0820">tRNA-binding</keyword>
<gene>
    <name evidence="1" type="primary">rpsM</name>
    <name type="ordered locus">MAB_3773c</name>
</gene>
<sequence>MARLVGVDLPRDKRMEIALTYIYGIGRTRSKEILAATGISPEQRSKDLTDDQVTQLREYIEATLKVEGDLRREVQADIRRKIEIGCYQGLRHRRGLPVRGQRTKTNARTRKGPKRTIAGKKKAR</sequence>
<accession>B1MGA2</accession>
<evidence type="ECO:0000255" key="1">
    <source>
        <dbReference type="HAMAP-Rule" id="MF_01315"/>
    </source>
</evidence>
<evidence type="ECO:0000256" key="2">
    <source>
        <dbReference type="SAM" id="MobiDB-lite"/>
    </source>
</evidence>
<evidence type="ECO:0000305" key="3"/>
<organism>
    <name type="scientific">Mycobacteroides abscessus (strain ATCC 19977 / DSM 44196 / CCUG 20993 / CIP 104536 / JCM 13569 / NCTC 13031 / TMC 1543 / L948)</name>
    <name type="common">Mycobacterium abscessus</name>
    <dbReference type="NCBI Taxonomy" id="561007"/>
    <lineage>
        <taxon>Bacteria</taxon>
        <taxon>Bacillati</taxon>
        <taxon>Actinomycetota</taxon>
        <taxon>Actinomycetes</taxon>
        <taxon>Mycobacteriales</taxon>
        <taxon>Mycobacteriaceae</taxon>
        <taxon>Mycobacteroides</taxon>
        <taxon>Mycobacteroides abscessus</taxon>
    </lineage>
</organism>
<protein>
    <recommendedName>
        <fullName evidence="1">Small ribosomal subunit protein uS13</fullName>
    </recommendedName>
    <alternativeName>
        <fullName evidence="3">30S ribosomal protein S13</fullName>
    </alternativeName>
</protein>
<proteinExistence type="inferred from homology"/>
<dbReference type="EMBL" id="CU458896">
    <property type="protein sequence ID" value="CAM63847.1"/>
    <property type="molecule type" value="Genomic_DNA"/>
</dbReference>
<dbReference type="RefSeq" id="WP_005055954.1">
    <property type="nucleotide sequence ID" value="NZ_MLCG01000001.1"/>
</dbReference>
<dbReference type="SMR" id="B1MGA2"/>
<dbReference type="GeneID" id="93380712"/>
<dbReference type="KEGG" id="mab:MAB_3773c"/>
<dbReference type="Proteomes" id="UP000007137">
    <property type="component" value="Chromosome"/>
</dbReference>
<dbReference type="GO" id="GO:0005829">
    <property type="term" value="C:cytosol"/>
    <property type="evidence" value="ECO:0007669"/>
    <property type="project" value="TreeGrafter"/>
</dbReference>
<dbReference type="GO" id="GO:0015935">
    <property type="term" value="C:small ribosomal subunit"/>
    <property type="evidence" value="ECO:0007669"/>
    <property type="project" value="TreeGrafter"/>
</dbReference>
<dbReference type="GO" id="GO:0019843">
    <property type="term" value="F:rRNA binding"/>
    <property type="evidence" value="ECO:0007669"/>
    <property type="project" value="UniProtKB-UniRule"/>
</dbReference>
<dbReference type="GO" id="GO:0003735">
    <property type="term" value="F:structural constituent of ribosome"/>
    <property type="evidence" value="ECO:0007669"/>
    <property type="project" value="InterPro"/>
</dbReference>
<dbReference type="GO" id="GO:0000049">
    <property type="term" value="F:tRNA binding"/>
    <property type="evidence" value="ECO:0007669"/>
    <property type="project" value="UniProtKB-UniRule"/>
</dbReference>
<dbReference type="GO" id="GO:0006412">
    <property type="term" value="P:translation"/>
    <property type="evidence" value="ECO:0007669"/>
    <property type="project" value="UniProtKB-UniRule"/>
</dbReference>
<dbReference type="FunFam" id="1.10.8.50:FF:000001">
    <property type="entry name" value="30S ribosomal protein S13"/>
    <property type="match status" value="1"/>
</dbReference>
<dbReference type="FunFam" id="4.10.910.10:FF:000001">
    <property type="entry name" value="30S ribosomal protein S13"/>
    <property type="match status" value="1"/>
</dbReference>
<dbReference type="Gene3D" id="1.10.8.50">
    <property type="match status" value="1"/>
</dbReference>
<dbReference type="Gene3D" id="4.10.910.10">
    <property type="entry name" value="30s ribosomal protein s13, domain 2"/>
    <property type="match status" value="1"/>
</dbReference>
<dbReference type="HAMAP" id="MF_01315">
    <property type="entry name" value="Ribosomal_uS13"/>
    <property type="match status" value="1"/>
</dbReference>
<dbReference type="InterPro" id="IPR027437">
    <property type="entry name" value="Rbsml_uS13_C"/>
</dbReference>
<dbReference type="InterPro" id="IPR001892">
    <property type="entry name" value="Ribosomal_uS13"/>
</dbReference>
<dbReference type="InterPro" id="IPR010979">
    <property type="entry name" value="Ribosomal_uS13-like_H2TH"/>
</dbReference>
<dbReference type="InterPro" id="IPR019980">
    <property type="entry name" value="Ribosomal_uS13_bac-type"/>
</dbReference>
<dbReference type="InterPro" id="IPR018269">
    <property type="entry name" value="Ribosomal_uS13_CS"/>
</dbReference>
<dbReference type="NCBIfam" id="TIGR03631">
    <property type="entry name" value="uS13_bact"/>
    <property type="match status" value="1"/>
</dbReference>
<dbReference type="PANTHER" id="PTHR10871">
    <property type="entry name" value="30S RIBOSOMAL PROTEIN S13/40S RIBOSOMAL PROTEIN S18"/>
    <property type="match status" value="1"/>
</dbReference>
<dbReference type="PANTHER" id="PTHR10871:SF1">
    <property type="entry name" value="SMALL RIBOSOMAL SUBUNIT PROTEIN US13M"/>
    <property type="match status" value="1"/>
</dbReference>
<dbReference type="Pfam" id="PF00416">
    <property type="entry name" value="Ribosomal_S13"/>
    <property type="match status" value="1"/>
</dbReference>
<dbReference type="PIRSF" id="PIRSF002134">
    <property type="entry name" value="Ribosomal_S13"/>
    <property type="match status" value="1"/>
</dbReference>
<dbReference type="SUPFAM" id="SSF46946">
    <property type="entry name" value="S13-like H2TH domain"/>
    <property type="match status" value="1"/>
</dbReference>
<dbReference type="PROSITE" id="PS00646">
    <property type="entry name" value="RIBOSOMAL_S13_1"/>
    <property type="match status" value="1"/>
</dbReference>
<dbReference type="PROSITE" id="PS50159">
    <property type="entry name" value="RIBOSOMAL_S13_2"/>
    <property type="match status" value="1"/>
</dbReference>
<name>RS13_MYCA9</name>